<proteinExistence type="inferred from homology"/>
<evidence type="ECO:0000255" key="1">
    <source>
        <dbReference type="HAMAP-Rule" id="MF_00278"/>
    </source>
</evidence>
<keyword id="KW-0028">Amino-acid biosynthesis</keyword>
<keyword id="KW-0963">Cytoplasm</keyword>
<keyword id="KW-0315">Glutamine amidotransferase</keyword>
<keyword id="KW-0368">Histidine biosynthesis</keyword>
<keyword id="KW-0378">Hydrolase</keyword>
<keyword id="KW-0456">Lyase</keyword>
<keyword id="KW-1185">Reference proteome</keyword>
<accession>Q8TS91</accession>
<protein>
    <recommendedName>
        <fullName evidence="1">Imidazole glycerol phosphate synthase subunit HisH</fullName>
        <ecNumber evidence="1">4.3.2.10</ecNumber>
    </recommendedName>
    <alternativeName>
        <fullName evidence="1">IGP synthase glutaminase subunit</fullName>
        <ecNumber evidence="1">3.5.1.2</ecNumber>
    </alternativeName>
    <alternativeName>
        <fullName evidence="1">IGP synthase subunit HisH</fullName>
    </alternativeName>
    <alternativeName>
        <fullName evidence="1">ImGP synthase subunit HisH</fullName>
        <shortName evidence="1">IGPS subunit HisH</shortName>
    </alternativeName>
</protein>
<organism>
    <name type="scientific">Methanosarcina acetivorans (strain ATCC 35395 / DSM 2834 / JCM 12185 / C2A)</name>
    <dbReference type="NCBI Taxonomy" id="188937"/>
    <lineage>
        <taxon>Archaea</taxon>
        <taxon>Methanobacteriati</taxon>
        <taxon>Methanobacteriota</taxon>
        <taxon>Stenosarchaea group</taxon>
        <taxon>Methanomicrobia</taxon>
        <taxon>Methanosarcinales</taxon>
        <taxon>Methanosarcinaceae</taxon>
        <taxon>Methanosarcina</taxon>
    </lineage>
</organism>
<sequence>MKRIVIIDYGLGNLRSVQKGLEHVGANPAISGNPEEILTADGIILPGVGAFIDAMKCLIPLKGVIAEFAESGKPMLGICLGQQVLMSSSEEGRLTGGLDLIQGRVLRFPKSELKVPHMGWNNIRIKQDHPLFKGISDGSFVYFVHSYYVDTTAENTLASCEYGLDFSASVVNSKGNVMGTQFHPEKSGTTGLKILKNFVEMC</sequence>
<comment type="function">
    <text evidence="1">IGPS catalyzes the conversion of PRFAR and glutamine to IGP, AICAR and glutamate. The HisH subunit catalyzes the hydrolysis of glutamine to glutamate and ammonia as part of the synthesis of IGP and AICAR. The resulting ammonia molecule is channeled to the active site of HisF.</text>
</comment>
<comment type="catalytic activity">
    <reaction evidence="1">
        <text>5-[(5-phospho-1-deoxy-D-ribulos-1-ylimino)methylamino]-1-(5-phospho-beta-D-ribosyl)imidazole-4-carboxamide + L-glutamine = D-erythro-1-(imidazol-4-yl)glycerol 3-phosphate + 5-amino-1-(5-phospho-beta-D-ribosyl)imidazole-4-carboxamide + L-glutamate + H(+)</text>
        <dbReference type="Rhea" id="RHEA:24793"/>
        <dbReference type="ChEBI" id="CHEBI:15378"/>
        <dbReference type="ChEBI" id="CHEBI:29985"/>
        <dbReference type="ChEBI" id="CHEBI:58278"/>
        <dbReference type="ChEBI" id="CHEBI:58359"/>
        <dbReference type="ChEBI" id="CHEBI:58475"/>
        <dbReference type="ChEBI" id="CHEBI:58525"/>
        <dbReference type="EC" id="4.3.2.10"/>
    </reaction>
</comment>
<comment type="catalytic activity">
    <reaction evidence="1">
        <text>L-glutamine + H2O = L-glutamate + NH4(+)</text>
        <dbReference type="Rhea" id="RHEA:15889"/>
        <dbReference type="ChEBI" id="CHEBI:15377"/>
        <dbReference type="ChEBI" id="CHEBI:28938"/>
        <dbReference type="ChEBI" id="CHEBI:29985"/>
        <dbReference type="ChEBI" id="CHEBI:58359"/>
        <dbReference type="EC" id="3.5.1.2"/>
    </reaction>
</comment>
<comment type="pathway">
    <text evidence="1">Amino-acid biosynthesis; L-histidine biosynthesis; L-histidine from 5-phospho-alpha-D-ribose 1-diphosphate: step 5/9.</text>
</comment>
<comment type="subunit">
    <text evidence="1">Heterodimer of HisH and HisF.</text>
</comment>
<comment type="subcellular location">
    <subcellularLocation>
        <location evidence="1">Cytoplasm</location>
    </subcellularLocation>
</comment>
<reference key="1">
    <citation type="journal article" date="2002" name="Genome Res.">
        <title>The genome of Methanosarcina acetivorans reveals extensive metabolic and physiological diversity.</title>
        <authorList>
            <person name="Galagan J.E."/>
            <person name="Nusbaum C."/>
            <person name="Roy A."/>
            <person name="Endrizzi M.G."/>
            <person name="Macdonald P."/>
            <person name="FitzHugh W."/>
            <person name="Calvo S."/>
            <person name="Engels R."/>
            <person name="Smirnov S."/>
            <person name="Atnoor D."/>
            <person name="Brown A."/>
            <person name="Allen N."/>
            <person name="Naylor J."/>
            <person name="Stange-Thomann N."/>
            <person name="DeArellano K."/>
            <person name="Johnson R."/>
            <person name="Linton L."/>
            <person name="McEwan P."/>
            <person name="McKernan K."/>
            <person name="Talamas J."/>
            <person name="Tirrell A."/>
            <person name="Ye W."/>
            <person name="Zimmer A."/>
            <person name="Barber R.D."/>
            <person name="Cann I."/>
            <person name="Graham D.E."/>
            <person name="Grahame D.A."/>
            <person name="Guss A.M."/>
            <person name="Hedderich R."/>
            <person name="Ingram-Smith C."/>
            <person name="Kuettner H.C."/>
            <person name="Krzycki J.A."/>
            <person name="Leigh J.A."/>
            <person name="Li W."/>
            <person name="Liu J."/>
            <person name="Mukhopadhyay B."/>
            <person name="Reeve J.N."/>
            <person name="Smith K."/>
            <person name="Springer T.A."/>
            <person name="Umayam L.A."/>
            <person name="White O."/>
            <person name="White R.H."/>
            <person name="de Macario E.C."/>
            <person name="Ferry J.G."/>
            <person name="Jarrell K.F."/>
            <person name="Jing H."/>
            <person name="Macario A.J.L."/>
            <person name="Paulsen I.T."/>
            <person name="Pritchett M."/>
            <person name="Sowers K.R."/>
            <person name="Swanson R.V."/>
            <person name="Zinder S.H."/>
            <person name="Lander E."/>
            <person name="Metcalf W.W."/>
            <person name="Birren B."/>
        </authorList>
    </citation>
    <scope>NUCLEOTIDE SEQUENCE [LARGE SCALE GENOMIC DNA]</scope>
    <source>
        <strain>ATCC 35395 / DSM 2834 / JCM 12185 / C2A</strain>
    </source>
</reference>
<name>HIS5_METAC</name>
<feature type="chain" id="PRO_0000152457" description="Imidazole glycerol phosphate synthase subunit HisH">
    <location>
        <begin position="1"/>
        <end position="202"/>
    </location>
</feature>
<feature type="domain" description="Glutamine amidotransferase type-1" evidence="1">
    <location>
        <begin position="3"/>
        <end position="202"/>
    </location>
</feature>
<feature type="active site" description="Nucleophile" evidence="1">
    <location>
        <position position="79"/>
    </location>
</feature>
<feature type="active site" evidence="1">
    <location>
        <position position="183"/>
    </location>
</feature>
<feature type="active site" evidence="1">
    <location>
        <position position="185"/>
    </location>
</feature>
<gene>
    <name evidence="1" type="primary">hisH</name>
    <name type="ordered locus">MA_0913</name>
</gene>
<dbReference type="EC" id="4.3.2.10" evidence="1"/>
<dbReference type="EC" id="3.5.1.2" evidence="1"/>
<dbReference type="EMBL" id="AE010299">
    <property type="protein sequence ID" value="AAM04346.1"/>
    <property type="molecule type" value="Genomic_DNA"/>
</dbReference>
<dbReference type="RefSeq" id="WP_011020951.1">
    <property type="nucleotide sequence ID" value="NC_003552.1"/>
</dbReference>
<dbReference type="SMR" id="Q8TS91"/>
<dbReference type="FunCoup" id="Q8TS91">
    <property type="interactions" value="81"/>
</dbReference>
<dbReference type="STRING" id="188937.MA_0913"/>
<dbReference type="EnsemblBacteria" id="AAM04346">
    <property type="protein sequence ID" value="AAM04346"/>
    <property type="gene ID" value="MA_0913"/>
</dbReference>
<dbReference type="GeneID" id="1472803"/>
<dbReference type="KEGG" id="mac:MA_0913"/>
<dbReference type="HOGENOM" id="CLU_071837_2_2_2"/>
<dbReference type="InParanoid" id="Q8TS91"/>
<dbReference type="OrthoDB" id="33401at2157"/>
<dbReference type="PhylomeDB" id="Q8TS91"/>
<dbReference type="UniPathway" id="UPA00031">
    <property type="reaction ID" value="UER00010"/>
</dbReference>
<dbReference type="Proteomes" id="UP000002487">
    <property type="component" value="Chromosome"/>
</dbReference>
<dbReference type="GO" id="GO:0005737">
    <property type="term" value="C:cytoplasm"/>
    <property type="evidence" value="ECO:0007669"/>
    <property type="project" value="UniProtKB-SubCell"/>
</dbReference>
<dbReference type="GO" id="GO:0004359">
    <property type="term" value="F:glutaminase activity"/>
    <property type="evidence" value="ECO:0007669"/>
    <property type="project" value="UniProtKB-EC"/>
</dbReference>
<dbReference type="GO" id="GO:0000107">
    <property type="term" value="F:imidazoleglycerol-phosphate synthase activity"/>
    <property type="evidence" value="ECO:0000318"/>
    <property type="project" value="GO_Central"/>
</dbReference>
<dbReference type="GO" id="GO:0016829">
    <property type="term" value="F:lyase activity"/>
    <property type="evidence" value="ECO:0007669"/>
    <property type="project" value="UniProtKB-KW"/>
</dbReference>
<dbReference type="GO" id="GO:0000105">
    <property type="term" value="P:L-histidine biosynthetic process"/>
    <property type="evidence" value="ECO:0007669"/>
    <property type="project" value="UniProtKB-UniRule"/>
</dbReference>
<dbReference type="CDD" id="cd01748">
    <property type="entry name" value="GATase1_IGP_Synthase"/>
    <property type="match status" value="1"/>
</dbReference>
<dbReference type="FunFam" id="3.40.50.880:FF:000028">
    <property type="entry name" value="Imidazole glycerol phosphate synthase subunit HisH"/>
    <property type="match status" value="1"/>
</dbReference>
<dbReference type="Gene3D" id="3.40.50.880">
    <property type="match status" value="1"/>
</dbReference>
<dbReference type="HAMAP" id="MF_00278">
    <property type="entry name" value="HisH"/>
    <property type="match status" value="1"/>
</dbReference>
<dbReference type="InterPro" id="IPR029062">
    <property type="entry name" value="Class_I_gatase-like"/>
</dbReference>
<dbReference type="InterPro" id="IPR017926">
    <property type="entry name" value="GATASE"/>
</dbReference>
<dbReference type="InterPro" id="IPR010139">
    <property type="entry name" value="Imidazole-glycPsynth_HisH"/>
</dbReference>
<dbReference type="NCBIfam" id="TIGR01855">
    <property type="entry name" value="IMP_synth_hisH"/>
    <property type="match status" value="1"/>
</dbReference>
<dbReference type="PANTHER" id="PTHR42701">
    <property type="entry name" value="IMIDAZOLE GLYCEROL PHOSPHATE SYNTHASE SUBUNIT HISH"/>
    <property type="match status" value="1"/>
</dbReference>
<dbReference type="PANTHER" id="PTHR42701:SF1">
    <property type="entry name" value="IMIDAZOLE GLYCEROL PHOSPHATE SYNTHASE SUBUNIT HISH"/>
    <property type="match status" value="1"/>
</dbReference>
<dbReference type="Pfam" id="PF00117">
    <property type="entry name" value="GATase"/>
    <property type="match status" value="1"/>
</dbReference>
<dbReference type="PIRSF" id="PIRSF000495">
    <property type="entry name" value="Amidotransf_hisH"/>
    <property type="match status" value="1"/>
</dbReference>
<dbReference type="SMART" id="SM01211">
    <property type="entry name" value="GATase_5"/>
    <property type="match status" value="1"/>
</dbReference>
<dbReference type="SUPFAM" id="SSF52317">
    <property type="entry name" value="Class I glutamine amidotransferase-like"/>
    <property type="match status" value="1"/>
</dbReference>
<dbReference type="PROSITE" id="PS51273">
    <property type="entry name" value="GATASE_TYPE_1"/>
    <property type="match status" value="1"/>
</dbReference>